<organism>
    <name type="scientific">Leishmania braziliensis</name>
    <dbReference type="NCBI Taxonomy" id="5660"/>
    <lineage>
        <taxon>Eukaryota</taxon>
        <taxon>Discoba</taxon>
        <taxon>Euglenozoa</taxon>
        <taxon>Kinetoplastea</taxon>
        <taxon>Metakinetoplastina</taxon>
        <taxon>Trypanosomatida</taxon>
        <taxon>Trypanosomatidae</taxon>
        <taxon>Leishmaniinae</taxon>
        <taxon>Leishmania</taxon>
        <taxon>Leishmania braziliensis species complex</taxon>
    </lineage>
</organism>
<reference key="1">
    <citation type="journal article" date="2007" name="Nat. Genet.">
        <title>Comparative genomic analysis of three Leishmania species that cause diverse human disease.</title>
        <authorList>
            <person name="Peacock C.S."/>
            <person name="Seeger K."/>
            <person name="Harris D."/>
            <person name="Murphy L."/>
            <person name="Ruiz J.C."/>
            <person name="Quail M.A."/>
            <person name="Peters N."/>
            <person name="Adlem E."/>
            <person name="Tivey A."/>
            <person name="Aslett M."/>
            <person name="Kerhornou A."/>
            <person name="Ivens A."/>
            <person name="Fraser A."/>
            <person name="Rajandream M.-A."/>
            <person name="Carver T."/>
            <person name="Norbertczak H."/>
            <person name="Chillingworth T."/>
            <person name="Hance Z."/>
            <person name="Jagels K."/>
            <person name="Moule S."/>
            <person name="Ormond D."/>
            <person name="Rutter S."/>
            <person name="Sqaures R."/>
            <person name="Whitehead S."/>
            <person name="Rabbinowitsch E."/>
            <person name="Arrowsmith C."/>
            <person name="White B."/>
            <person name="Thurston S."/>
            <person name="Bringaud F."/>
            <person name="Baldauf S.L."/>
            <person name="Faulconbridge A."/>
            <person name="Jeffares D."/>
            <person name="Depledge D.P."/>
            <person name="Oyola S.O."/>
            <person name="Hilley J.D."/>
            <person name="Brito L.O."/>
            <person name="Tosi L.R.O."/>
            <person name="Barrell B."/>
            <person name="Cruz A.K."/>
            <person name="Mottram J.C."/>
            <person name="Smith D.F."/>
            <person name="Berriman M."/>
        </authorList>
    </citation>
    <scope>NUCLEOTIDE SEQUENCE [LARGE SCALE GENOMIC DNA]</scope>
    <source>
        <strain>MHOM/BR/75/M2904</strain>
    </source>
</reference>
<proteinExistence type="inferred from homology"/>
<sequence>MLPGYTAESKDGAHGYERLHDIILQDSDADGEDDVILFPHAEELANAAVGIDGDDGNGRVVRLGTTQHLDESDSSEDEATLNRVGDIPLEWYKDEKHIGYDIEGKKLMKAERSALERLLEATDDPNAMRTIYDALHDEKKTLSNADLQLIFNLQRNRTTNSNYDMYSGVQEDTVVFDPLNHPLARSSGPSKKAFVPALHDTKVIAKMVRRLRKEEAESKLRPATEEKEDEDQLLWDDGHVEMDTHTHFKYFNRVPKPKVPPPGTFESYRPPPEYLPSERAKQRQARLRTIDRREHFLPQSFDALRHVPFYHHTIQDRYQRCLDLAFFPRAQRTRLVVDPDKLLPELPNPKDLRPYPEKLSFHYKGHTATVRSVSVSPNGQYLATGCDDHLVRVYEVQTGRLMKRYDMGAPVQQVEFCPSKSLNILAAAVEYSLVFVVPTFAAHALVNDHTIRFLRAPGLSAGQREAAHALGAVDTLGGRAVTQTTLDADETAHEATTDLHDVEEREKRAEFLDASAKERNAGIVVKIAMHAKVKKFCFHIKGDYLCALCPKDHVKYRQTIMLQLSKRKVFCPFRKFSEVVTDCRFHPREPLFFLATTNSVRCYNLMAHRLQRRFKASGGVTTCLSIHPEGDNFLVGDTTSHTSWFDMDFSDKPYKRMRSHKGVVNALAFHPKTGAYPLFATGASDGQVHVFHGMVYDDYNKNALVVPVKILKHQRSVYAVAWHPSLAWLFTSTEDGVVTAWTE</sequence>
<keyword id="KW-0539">Nucleus</keyword>
<keyword id="KW-1185">Reference proteome</keyword>
<keyword id="KW-0677">Repeat</keyword>
<keyword id="KW-0690">Ribosome biogenesis</keyword>
<keyword id="KW-0698">rRNA processing</keyword>
<keyword id="KW-0853">WD repeat</keyword>
<evidence type="ECO:0000255" key="1">
    <source>
        <dbReference type="HAMAP-Rule" id="MF_03027"/>
    </source>
</evidence>
<comment type="function">
    <text evidence="1">Required for maturation of ribosomal RNAs and formation of the large ribosomal subunit.</text>
</comment>
<comment type="subcellular location">
    <subcellularLocation>
        <location evidence="1">Nucleus</location>
        <location evidence="1">Nucleolus</location>
    </subcellularLocation>
    <subcellularLocation>
        <location evidence="1">Nucleus</location>
        <location evidence="1">Nucleoplasm</location>
    </subcellularLocation>
</comment>
<comment type="similarity">
    <text evidence="1">Belongs to the WD repeat BOP1/ERB1 family.</text>
</comment>
<name>BOP1_LEIBR</name>
<accession>A4H6F7</accession>
<dbReference type="EMBL" id="FR798985">
    <property type="protein sequence ID" value="CAM41909.1"/>
    <property type="molecule type" value="Genomic_DNA"/>
</dbReference>
<dbReference type="RefSeq" id="XP_001562944.1">
    <property type="nucleotide sequence ID" value="XM_001562894.1"/>
</dbReference>
<dbReference type="SMR" id="A4H6F7"/>
<dbReference type="FunCoup" id="A4H6F7">
    <property type="interactions" value="289"/>
</dbReference>
<dbReference type="STRING" id="5660.A4H6F7"/>
<dbReference type="GeneID" id="5413433"/>
<dbReference type="KEGG" id="lbz:LBRM_11_0090"/>
<dbReference type="VEuPathDB" id="TriTrypDB:LbrM.11.0090"/>
<dbReference type="InParanoid" id="A4H6F7"/>
<dbReference type="OMA" id="MRPAKGE"/>
<dbReference type="Proteomes" id="UP000007258">
    <property type="component" value="Chromosome 11"/>
</dbReference>
<dbReference type="GO" id="GO:0005654">
    <property type="term" value="C:nucleoplasm"/>
    <property type="evidence" value="ECO:0007669"/>
    <property type="project" value="UniProtKB-SubCell"/>
</dbReference>
<dbReference type="GO" id="GO:0070545">
    <property type="term" value="C:PeBoW complex"/>
    <property type="evidence" value="ECO:0007669"/>
    <property type="project" value="TreeGrafter"/>
</dbReference>
<dbReference type="GO" id="GO:0030687">
    <property type="term" value="C:preribosome, large subunit precursor"/>
    <property type="evidence" value="ECO:0007669"/>
    <property type="project" value="UniProtKB-UniRule"/>
</dbReference>
<dbReference type="GO" id="GO:0043021">
    <property type="term" value="F:ribonucleoprotein complex binding"/>
    <property type="evidence" value="ECO:0007669"/>
    <property type="project" value="UniProtKB-UniRule"/>
</dbReference>
<dbReference type="GO" id="GO:0000466">
    <property type="term" value="P:maturation of 5.8S rRNA from tricistronic rRNA transcript (SSU-rRNA, 5.8S rRNA, LSU-rRNA)"/>
    <property type="evidence" value="ECO:0007669"/>
    <property type="project" value="UniProtKB-UniRule"/>
</dbReference>
<dbReference type="GO" id="GO:0000463">
    <property type="term" value="P:maturation of LSU-rRNA from tricistronic rRNA transcript (SSU-rRNA, 5.8S rRNA, LSU-rRNA)"/>
    <property type="evidence" value="ECO:0007669"/>
    <property type="project" value="UniProtKB-UniRule"/>
</dbReference>
<dbReference type="Gene3D" id="2.130.10.10">
    <property type="entry name" value="YVTN repeat-like/Quinoprotein amine dehydrogenase"/>
    <property type="match status" value="1"/>
</dbReference>
<dbReference type="HAMAP" id="MF_03027">
    <property type="entry name" value="BOP1"/>
    <property type="match status" value="1"/>
</dbReference>
<dbReference type="InterPro" id="IPR028598">
    <property type="entry name" value="BOP1/Erb1"/>
</dbReference>
<dbReference type="InterPro" id="IPR012953">
    <property type="entry name" value="BOP1_N_dom"/>
</dbReference>
<dbReference type="InterPro" id="IPR015943">
    <property type="entry name" value="WD40/YVTN_repeat-like_dom_sf"/>
</dbReference>
<dbReference type="InterPro" id="IPR036322">
    <property type="entry name" value="WD40_repeat_dom_sf"/>
</dbReference>
<dbReference type="InterPro" id="IPR001680">
    <property type="entry name" value="WD40_rpt"/>
</dbReference>
<dbReference type="PANTHER" id="PTHR17605:SF0">
    <property type="entry name" value="RIBOSOME BIOGENESIS PROTEIN BOP1"/>
    <property type="match status" value="1"/>
</dbReference>
<dbReference type="PANTHER" id="PTHR17605">
    <property type="entry name" value="RIBOSOME BIOGENESIS PROTEIN BOP1 BLOCK OF PROLIFERATION 1 PROTEIN"/>
    <property type="match status" value="1"/>
</dbReference>
<dbReference type="Pfam" id="PF08145">
    <property type="entry name" value="BOP1NT"/>
    <property type="match status" value="1"/>
</dbReference>
<dbReference type="Pfam" id="PF00400">
    <property type="entry name" value="WD40"/>
    <property type="match status" value="3"/>
</dbReference>
<dbReference type="SMART" id="SM01035">
    <property type="entry name" value="BOP1NT"/>
    <property type="match status" value="1"/>
</dbReference>
<dbReference type="SMART" id="SM00320">
    <property type="entry name" value="WD40"/>
    <property type="match status" value="5"/>
</dbReference>
<dbReference type="SUPFAM" id="SSF50978">
    <property type="entry name" value="WD40 repeat-like"/>
    <property type="match status" value="1"/>
</dbReference>
<dbReference type="PROSITE" id="PS50082">
    <property type="entry name" value="WD_REPEATS_2"/>
    <property type="match status" value="2"/>
</dbReference>
<dbReference type="PROSITE" id="PS50294">
    <property type="entry name" value="WD_REPEATS_REGION"/>
    <property type="match status" value="2"/>
</dbReference>
<gene>
    <name type="ORF">LbrM11_V2.0090</name>
    <name type="ORF">LbrM_11_0090</name>
</gene>
<protein>
    <recommendedName>
        <fullName evidence="1">Ribosome biogenesis protein BOP1 homolog</fullName>
    </recommendedName>
</protein>
<feature type="chain" id="PRO_0000370410" description="Ribosome biogenesis protein BOP1 homolog">
    <location>
        <begin position="1"/>
        <end position="743"/>
    </location>
</feature>
<feature type="repeat" description="WD 1">
    <location>
        <begin position="365"/>
        <end position="404"/>
    </location>
</feature>
<feature type="repeat" description="WD 2">
    <location>
        <begin position="575"/>
        <end position="615"/>
    </location>
</feature>
<feature type="repeat" description="WD 3">
    <location>
        <begin position="617"/>
        <end position="655"/>
    </location>
</feature>
<feature type="repeat" description="WD 4">
    <location>
        <begin position="659"/>
        <end position="701"/>
    </location>
</feature>
<feature type="repeat" description="WD 5">
    <location>
        <begin position="712"/>
        <end position="743"/>
    </location>
</feature>